<sequence length="176" mass="19641">MAMTGLNTAGSDRDYDTQSLNRELQDKGFLLTTTEDLINWARTGSLHWMTFGLACCAVEMMHTSMPRYDVERFGVAPRASPRQSDVMIVAGTLTNKMAPALRKVYDQMPEPRYVISMGSCANGGGYYHYSYSVVRGCDRIVPVDIYVPGCPPTAEALLYGILQLQRKIRRTGTITR</sequence>
<organism>
    <name type="scientific">Cereibacter sphaeroides (strain ATCC 17029 / ATH 2.4.9)</name>
    <name type="common">Rhodobacter sphaeroides</name>
    <dbReference type="NCBI Taxonomy" id="349101"/>
    <lineage>
        <taxon>Bacteria</taxon>
        <taxon>Pseudomonadati</taxon>
        <taxon>Pseudomonadota</taxon>
        <taxon>Alphaproteobacteria</taxon>
        <taxon>Rhodobacterales</taxon>
        <taxon>Paracoccaceae</taxon>
        <taxon>Cereibacter</taxon>
    </lineage>
</organism>
<dbReference type="EC" id="7.1.1.-" evidence="2"/>
<dbReference type="EMBL" id="CP000577">
    <property type="protein sequence ID" value="ABN76285.1"/>
    <property type="molecule type" value="Genomic_DNA"/>
</dbReference>
<dbReference type="SMR" id="A3PIW9"/>
<dbReference type="KEGG" id="rsh:Rsph17029_1175"/>
<dbReference type="HOGENOM" id="CLU_055737_7_0_5"/>
<dbReference type="GO" id="GO:0005886">
    <property type="term" value="C:plasma membrane"/>
    <property type="evidence" value="ECO:0007669"/>
    <property type="project" value="UniProtKB-SubCell"/>
</dbReference>
<dbReference type="GO" id="GO:0045271">
    <property type="term" value="C:respiratory chain complex I"/>
    <property type="evidence" value="ECO:0007669"/>
    <property type="project" value="TreeGrafter"/>
</dbReference>
<dbReference type="GO" id="GO:0051539">
    <property type="term" value="F:4 iron, 4 sulfur cluster binding"/>
    <property type="evidence" value="ECO:0007669"/>
    <property type="project" value="UniProtKB-KW"/>
</dbReference>
<dbReference type="GO" id="GO:0005506">
    <property type="term" value="F:iron ion binding"/>
    <property type="evidence" value="ECO:0007669"/>
    <property type="project" value="UniProtKB-UniRule"/>
</dbReference>
<dbReference type="GO" id="GO:0008137">
    <property type="term" value="F:NADH dehydrogenase (ubiquinone) activity"/>
    <property type="evidence" value="ECO:0007669"/>
    <property type="project" value="InterPro"/>
</dbReference>
<dbReference type="GO" id="GO:0050136">
    <property type="term" value="F:NADH:ubiquinone reductase (non-electrogenic) activity"/>
    <property type="evidence" value="ECO:0007669"/>
    <property type="project" value="UniProtKB-UniRule"/>
</dbReference>
<dbReference type="GO" id="GO:0048038">
    <property type="term" value="F:quinone binding"/>
    <property type="evidence" value="ECO:0007669"/>
    <property type="project" value="UniProtKB-KW"/>
</dbReference>
<dbReference type="GO" id="GO:0009060">
    <property type="term" value="P:aerobic respiration"/>
    <property type="evidence" value="ECO:0007669"/>
    <property type="project" value="TreeGrafter"/>
</dbReference>
<dbReference type="GO" id="GO:0015990">
    <property type="term" value="P:electron transport coupled proton transport"/>
    <property type="evidence" value="ECO:0007669"/>
    <property type="project" value="TreeGrafter"/>
</dbReference>
<dbReference type="FunFam" id="3.40.50.12280:FF:000001">
    <property type="entry name" value="NADH-quinone oxidoreductase subunit B 2"/>
    <property type="match status" value="1"/>
</dbReference>
<dbReference type="Gene3D" id="3.40.50.12280">
    <property type="match status" value="1"/>
</dbReference>
<dbReference type="HAMAP" id="MF_01356">
    <property type="entry name" value="NDH1_NuoB"/>
    <property type="match status" value="1"/>
</dbReference>
<dbReference type="InterPro" id="IPR006137">
    <property type="entry name" value="NADH_UbQ_OxRdtase-like_20kDa"/>
</dbReference>
<dbReference type="InterPro" id="IPR006138">
    <property type="entry name" value="NADH_UQ_OxRdtase_20Kd_su"/>
</dbReference>
<dbReference type="NCBIfam" id="TIGR01957">
    <property type="entry name" value="nuoB_fam"/>
    <property type="match status" value="1"/>
</dbReference>
<dbReference type="NCBIfam" id="NF005012">
    <property type="entry name" value="PRK06411.1"/>
    <property type="match status" value="1"/>
</dbReference>
<dbReference type="PANTHER" id="PTHR11995">
    <property type="entry name" value="NADH DEHYDROGENASE"/>
    <property type="match status" value="1"/>
</dbReference>
<dbReference type="PANTHER" id="PTHR11995:SF14">
    <property type="entry name" value="NADH DEHYDROGENASE [UBIQUINONE] IRON-SULFUR PROTEIN 7, MITOCHONDRIAL"/>
    <property type="match status" value="1"/>
</dbReference>
<dbReference type="Pfam" id="PF01058">
    <property type="entry name" value="Oxidored_q6"/>
    <property type="match status" value="1"/>
</dbReference>
<dbReference type="SUPFAM" id="SSF56770">
    <property type="entry name" value="HydA/Nqo6-like"/>
    <property type="match status" value="1"/>
</dbReference>
<dbReference type="PROSITE" id="PS01150">
    <property type="entry name" value="COMPLEX1_20K"/>
    <property type="match status" value="1"/>
</dbReference>
<name>NUOB1_CERS1</name>
<evidence type="ECO:0000250" key="1"/>
<evidence type="ECO:0000255" key="2">
    <source>
        <dbReference type="HAMAP-Rule" id="MF_01356"/>
    </source>
</evidence>
<reference key="1">
    <citation type="submission" date="2007-02" db="EMBL/GenBank/DDBJ databases">
        <title>Complete sequence of chromosome 1 of Rhodobacter sphaeroides ATCC 17029.</title>
        <authorList>
            <person name="Copeland A."/>
            <person name="Lucas S."/>
            <person name="Lapidus A."/>
            <person name="Barry K."/>
            <person name="Detter J.C."/>
            <person name="Glavina del Rio T."/>
            <person name="Hammon N."/>
            <person name="Israni S."/>
            <person name="Dalin E."/>
            <person name="Tice H."/>
            <person name="Pitluck S."/>
            <person name="Kiss H."/>
            <person name="Brettin T."/>
            <person name="Bruce D."/>
            <person name="Han C."/>
            <person name="Tapia R."/>
            <person name="Gilna P."/>
            <person name="Schmutz J."/>
            <person name="Larimer F."/>
            <person name="Land M."/>
            <person name="Hauser L."/>
            <person name="Kyrpides N."/>
            <person name="Mikhailova N."/>
            <person name="Richardson P."/>
            <person name="Mackenzie C."/>
            <person name="Choudhary M."/>
            <person name="Donohue T.J."/>
            <person name="Kaplan S."/>
        </authorList>
    </citation>
    <scope>NUCLEOTIDE SEQUENCE [LARGE SCALE GENOMIC DNA]</scope>
    <source>
        <strain>ATCC 17029 / ATH 2.4.9</strain>
    </source>
</reference>
<comment type="function">
    <text evidence="1">NDH-1 shuttles electrons from NADH, via FMN and iron-sulfur (Fe-S) centers, to quinones in the respiratory chain. Couples the redox reaction to proton translocation (for every two electrons transferred, four hydrogen ions are translocated across the cytoplasmic membrane), and thus conserves the redox energy in a proton gradient (By similarity).</text>
</comment>
<comment type="catalytic activity">
    <reaction evidence="2">
        <text>a quinone + NADH + 5 H(+)(in) = a quinol + NAD(+) + 4 H(+)(out)</text>
        <dbReference type="Rhea" id="RHEA:57888"/>
        <dbReference type="ChEBI" id="CHEBI:15378"/>
        <dbReference type="ChEBI" id="CHEBI:24646"/>
        <dbReference type="ChEBI" id="CHEBI:57540"/>
        <dbReference type="ChEBI" id="CHEBI:57945"/>
        <dbReference type="ChEBI" id="CHEBI:132124"/>
    </reaction>
</comment>
<comment type="cofactor">
    <cofactor evidence="2">
        <name>[4Fe-4S] cluster</name>
        <dbReference type="ChEBI" id="CHEBI:49883"/>
    </cofactor>
    <text evidence="2">Binds 1 [4Fe-4S] cluster.</text>
</comment>
<comment type="subunit">
    <text evidence="2">NDH-1 is composed of 14 different subunits. Subunits NuoB, C, D, E, F, and G constitute the peripheral sector of the complex.</text>
</comment>
<comment type="subcellular location">
    <subcellularLocation>
        <location evidence="2">Cell inner membrane</location>
        <topology evidence="2">Peripheral membrane protein</topology>
        <orientation evidence="2">Cytoplasmic side</orientation>
    </subcellularLocation>
</comment>
<comment type="similarity">
    <text evidence="2">Belongs to the complex I 20 kDa subunit family.</text>
</comment>
<accession>A3PIW9</accession>
<keyword id="KW-0004">4Fe-4S</keyword>
<keyword id="KW-0997">Cell inner membrane</keyword>
<keyword id="KW-1003">Cell membrane</keyword>
<keyword id="KW-0408">Iron</keyword>
<keyword id="KW-0411">Iron-sulfur</keyword>
<keyword id="KW-0472">Membrane</keyword>
<keyword id="KW-0479">Metal-binding</keyword>
<keyword id="KW-0520">NAD</keyword>
<keyword id="KW-0874">Quinone</keyword>
<keyword id="KW-1278">Translocase</keyword>
<keyword id="KW-0813">Transport</keyword>
<keyword id="KW-0830">Ubiquinone</keyword>
<proteinExistence type="inferred from homology"/>
<protein>
    <recommendedName>
        <fullName evidence="2">NADH-quinone oxidoreductase subunit B 1</fullName>
        <ecNumber evidence="2">7.1.1.-</ecNumber>
    </recommendedName>
    <alternativeName>
        <fullName evidence="2">NADH dehydrogenase I subunit B 1</fullName>
    </alternativeName>
    <alternativeName>
        <fullName evidence="2">NDH-1 subunit B 1</fullName>
    </alternativeName>
</protein>
<feature type="chain" id="PRO_0000358468" description="NADH-quinone oxidoreductase subunit B 1">
    <location>
        <begin position="1"/>
        <end position="176"/>
    </location>
</feature>
<feature type="binding site" evidence="2">
    <location>
        <position position="55"/>
    </location>
    <ligand>
        <name>[4Fe-4S] cluster</name>
        <dbReference type="ChEBI" id="CHEBI:49883"/>
    </ligand>
</feature>
<feature type="binding site" evidence="2">
    <location>
        <position position="56"/>
    </location>
    <ligand>
        <name>[4Fe-4S] cluster</name>
        <dbReference type="ChEBI" id="CHEBI:49883"/>
    </ligand>
</feature>
<feature type="binding site" evidence="2">
    <location>
        <position position="120"/>
    </location>
    <ligand>
        <name>[4Fe-4S] cluster</name>
        <dbReference type="ChEBI" id="CHEBI:49883"/>
    </ligand>
</feature>
<feature type="binding site" evidence="2">
    <location>
        <position position="150"/>
    </location>
    <ligand>
        <name>[4Fe-4S] cluster</name>
        <dbReference type="ChEBI" id="CHEBI:49883"/>
    </ligand>
</feature>
<gene>
    <name evidence="2" type="primary">nuoB1</name>
    <name type="ordered locus">Rsph17029_1175</name>
</gene>